<name>RN168_XENTR</name>
<organism>
    <name type="scientific">Xenopus tropicalis</name>
    <name type="common">Western clawed frog</name>
    <name type="synonym">Silurana tropicalis</name>
    <dbReference type="NCBI Taxonomy" id="8364"/>
    <lineage>
        <taxon>Eukaryota</taxon>
        <taxon>Metazoa</taxon>
        <taxon>Chordata</taxon>
        <taxon>Craniata</taxon>
        <taxon>Vertebrata</taxon>
        <taxon>Euteleostomi</taxon>
        <taxon>Amphibia</taxon>
        <taxon>Batrachia</taxon>
        <taxon>Anura</taxon>
        <taxon>Pipoidea</taxon>
        <taxon>Pipidae</taxon>
        <taxon>Xenopodinae</taxon>
        <taxon>Xenopus</taxon>
        <taxon>Silurana</taxon>
    </lineage>
</organism>
<sequence>MAKVQKLPLPWSECICPICQEILLEPVTLPCKHTLCNPCFQMTVEKASLCCPFCRKRVSTWARQHSRTRTLVNKELWEVIQKQYPKQCQRRASGQESDDLSDELTSCPVPVLCKPGEIRQEYEAEVSKIEAERTAQEEAERKASEDYIQKLLAEEEAEENLHAEASQREIEEQLKRDEELARLLSGDMDLSNASCTSVSPVTSKKVVSKSSKIVKSKQRVSGDIERFLSPKPRRALAAFGINESRNSDTSGSCILLDEDEDEIPDLSPQCPSTSLIQERDVELPMPYLPNCYKLESDAASQQDSCSERNDICNGTYSCSDSIDVEVSKTMEQQRATADSQEYRMETNAMSYSTPKRKCEECYLDIEEKAGSCQSVKKKKLSLSEDSPVLSVHAGKFIELEENLYERRKQEEHDRLFALQLQRELDKELKQVNRGKGSPDEYQLRPKRGLKLQECNDSPLPHNEQTPVQDKGGNTQSGYSPDENKKPSRKKSITSSQVRQSRAVTNTERSSEGMNVLKPSNKQPTILDLFQRSAGK</sequence>
<gene>
    <name evidence="1" type="primary">rnf168</name>
</gene>
<reference key="1">
    <citation type="submission" date="2008-01" db="EMBL/GenBank/DDBJ databases">
        <authorList>
            <consortium name="NIH - Xenopus Gene Collection (XGC) project"/>
        </authorList>
    </citation>
    <scope>NUCLEOTIDE SEQUENCE [LARGE SCALE MRNA]</scope>
    <source>
        <tissue>Embryo</tissue>
    </source>
</reference>
<comment type="function">
    <text evidence="1">E3 ubiquitin-protein ligase required for accumulation of repair proteins to sites of DNA damage. Acts with ube2n/ubc13 to amplify the rnf8-dependent histone ubiquitination. Recruited to sites of DNA damage at double-strand breaks (DSBs) by binding to ubiquitinated histone H2A and ubiquitinates histone H2A and H2AX, leading to amplify the rnf8-dependent H2A ubiquitination and promoting the formation of 'Lys-63'-linked ubiquitin conjugates. This leads to concentrate ubiquitinated histones H2A and H2AX at DNA lesions to the threshold required for recruitment of tp53bp1 and brca1. Catalyzes monoubiquitination of 'Lys-13' and 'Lys-15' of nucleosomal histone H2A (H2AK13Ub and H2AK15Ub, respectively).</text>
</comment>
<comment type="catalytic activity">
    <reaction evidence="1">
        <text>S-ubiquitinyl-[E2 ubiquitin-conjugating enzyme]-L-cysteine + [acceptor protein]-L-lysine = [E2 ubiquitin-conjugating enzyme]-L-cysteine + N(6)-ubiquitinyl-[acceptor protein]-L-lysine.</text>
        <dbReference type="EC" id="2.3.2.27"/>
    </reaction>
</comment>
<comment type="pathway">
    <text evidence="1">Protein modification; protein ubiquitination.</text>
</comment>
<comment type="subunit">
    <text evidence="1">Monomer.</text>
</comment>
<comment type="subcellular location">
    <subcellularLocation>
        <location evidence="1">Nucleus</location>
    </subcellularLocation>
    <text evidence="1">Localizes to double-strand breaks (DSBs) sites of DNA damage.</text>
</comment>
<comment type="domain">
    <text evidence="1">The MIU motif (motif interacting with ubiquitin) mediates the interaction with both 'Lys-48'- and 'Lys-63'-linked ubiquitin chains. The UMI motif mediates interaction with ubiquitin with a preference for 'Lys-63'-linked ubiquitin. The specificity for different types of ubiquitin is mediated by juxtaposition of ubiquitin-binding motifs (MIU and UMI motifs) with LR motifs (LRMs).</text>
</comment>
<comment type="similarity">
    <text evidence="1">Belongs to the RNF168 family.</text>
</comment>
<proteinExistence type="evidence at transcript level"/>
<evidence type="ECO:0000255" key="1">
    <source>
        <dbReference type="HAMAP-Rule" id="MF_03066"/>
    </source>
</evidence>
<evidence type="ECO:0000256" key="2">
    <source>
        <dbReference type="SAM" id="MobiDB-lite"/>
    </source>
</evidence>
<dbReference type="EC" id="2.3.2.27" evidence="1"/>
<dbReference type="EMBL" id="BC158160">
    <property type="protein sequence ID" value="AAI58161.1"/>
    <property type="molecule type" value="mRNA"/>
</dbReference>
<dbReference type="RefSeq" id="NP_001119969.1">
    <property type="nucleotide sequence ID" value="NM_001126497.1"/>
</dbReference>
<dbReference type="SMR" id="B0BLU1"/>
<dbReference type="FunCoup" id="B0BLU1">
    <property type="interactions" value="1891"/>
</dbReference>
<dbReference type="STRING" id="8364.ENSXETP00000018597"/>
<dbReference type="PaxDb" id="8364-ENSXETP00000006779"/>
<dbReference type="GeneID" id="100144920"/>
<dbReference type="KEGG" id="xtr:100144920"/>
<dbReference type="AGR" id="Xenbase:XB-GENE-5765249"/>
<dbReference type="CTD" id="165918"/>
<dbReference type="Xenbase" id="XB-GENE-5765249">
    <property type="gene designation" value="rnf168"/>
</dbReference>
<dbReference type="eggNOG" id="KOG4159">
    <property type="taxonomic scope" value="Eukaryota"/>
</dbReference>
<dbReference type="InParanoid" id="B0BLU1"/>
<dbReference type="OrthoDB" id="426657at2759"/>
<dbReference type="UniPathway" id="UPA00143"/>
<dbReference type="Proteomes" id="UP000008143">
    <property type="component" value="Chromosome 5"/>
</dbReference>
<dbReference type="GO" id="GO:0005634">
    <property type="term" value="C:nucleus"/>
    <property type="evidence" value="ECO:0000250"/>
    <property type="project" value="UniProtKB"/>
</dbReference>
<dbReference type="GO" id="GO:0035861">
    <property type="term" value="C:site of double-strand break"/>
    <property type="evidence" value="ECO:0000250"/>
    <property type="project" value="UniProtKB"/>
</dbReference>
<dbReference type="GO" id="GO:0000151">
    <property type="term" value="C:ubiquitin ligase complex"/>
    <property type="evidence" value="ECO:0000250"/>
    <property type="project" value="UniProtKB"/>
</dbReference>
<dbReference type="GO" id="GO:0003682">
    <property type="term" value="F:chromatin binding"/>
    <property type="evidence" value="ECO:0000250"/>
    <property type="project" value="UniProtKB"/>
</dbReference>
<dbReference type="GO" id="GO:0042393">
    <property type="term" value="F:histone binding"/>
    <property type="evidence" value="ECO:0000250"/>
    <property type="project" value="UniProtKB"/>
</dbReference>
<dbReference type="GO" id="GO:0070530">
    <property type="term" value="F:K63-linked polyubiquitin modification-dependent protein binding"/>
    <property type="evidence" value="ECO:0000250"/>
    <property type="project" value="UniProtKB"/>
</dbReference>
<dbReference type="GO" id="GO:0043130">
    <property type="term" value="F:ubiquitin binding"/>
    <property type="evidence" value="ECO:0000250"/>
    <property type="project" value="UniProtKB"/>
</dbReference>
<dbReference type="GO" id="GO:0004842">
    <property type="term" value="F:ubiquitin-protein transferase activity"/>
    <property type="evidence" value="ECO:0000250"/>
    <property type="project" value="UniProtKB"/>
</dbReference>
<dbReference type="GO" id="GO:0008270">
    <property type="term" value="F:zinc ion binding"/>
    <property type="evidence" value="ECO:0007669"/>
    <property type="project" value="UniProtKB-KW"/>
</dbReference>
<dbReference type="GO" id="GO:0006974">
    <property type="term" value="P:DNA damage response"/>
    <property type="evidence" value="ECO:0000250"/>
    <property type="project" value="UniProtKB"/>
</dbReference>
<dbReference type="GO" id="GO:0140861">
    <property type="term" value="P:DNA repair-dependent chromatin remodeling"/>
    <property type="evidence" value="ECO:0000250"/>
    <property type="project" value="UniProtKB"/>
</dbReference>
<dbReference type="GO" id="GO:0006302">
    <property type="term" value="P:double-strand break repair"/>
    <property type="evidence" value="ECO:0000250"/>
    <property type="project" value="UniProtKB"/>
</dbReference>
<dbReference type="GO" id="GO:0045190">
    <property type="term" value="P:isotype switching"/>
    <property type="evidence" value="ECO:0000250"/>
    <property type="project" value="UniProtKB"/>
</dbReference>
<dbReference type="GO" id="GO:0034244">
    <property type="term" value="P:negative regulation of transcription elongation by RNA polymerase II"/>
    <property type="evidence" value="ECO:0000250"/>
    <property type="project" value="UniProtKB"/>
</dbReference>
<dbReference type="GO" id="GO:0045739">
    <property type="term" value="P:positive regulation of DNA repair"/>
    <property type="evidence" value="ECO:0000250"/>
    <property type="project" value="UniProtKB"/>
</dbReference>
<dbReference type="GO" id="GO:0070534">
    <property type="term" value="P:protein K63-linked ubiquitination"/>
    <property type="evidence" value="ECO:0000250"/>
    <property type="project" value="UniProtKB"/>
</dbReference>
<dbReference type="GO" id="GO:0016567">
    <property type="term" value="P:protein ubiquitination"/>
    <property type="evidence" value="ECO:0000250"/>
    <property type="project" value="UniProtKB"/>
</dbReference>
<dbReference type="GO" id="GO:0010212">
    <property type="term" value="P:response to ionizing radiation"/>
    <property type="evidence" value="ECO:0000250"/>
    <property type="project" value="UniProtKB"/>
</dbReference>
<dbReference type="GO" id="GO:0006511">
    <property type="term" value="P:ubiquitin-dependent protein catabolic process"/>
    <property type="evidence" value="ECO:0000250"/>
    <property type="project" value="UniProtKB"/>
</dbReference>
<dbReference type="CDD" id="cd21952">
    <property type="entry name" value="MIU2_RNF168"/>
    <property type="match status" value="1"/>
</dbReference>
<dbReference type="CDD" id="cd16550">
    <property type="entry name" value="RING-HC_RNF168"/>
    <property type="match status" value="1"/>
</dbReference>
<dbReference type="CDD" id="cd22265">
    <property type="entry name" value="UDM1_RNF168"/>
    <property type="match status" value="1"/>
</dbReference>
<dbReference type="FunFam" id="3.30.40.10:FF:000466">
    <property type="entry name" value="E3 ubiquitin-protein ligase RNF168"/>
    <property type="match status" value="1"/>
</dbReference>
<dbReference type="Gene3D" id="3.30.40.10">
    <property type="entry name" value="Zinc/RING finger domain, C3HC4 (zinc finger)"/>
    <property type="match status" value="1"/>
</dbReference>
<dbReference type="HAMAP" id="MF_03066">
    <property type="entry name" value="RNF168"/>
    <property type="match status" value="1"/>
</dbReference>
<dbReference type="InterPro" id="IPR034725">
    <property type="entry name" value="RNF168"/>
</dbReference>
<dbReference type="InterPro" id="IPR051657">
    <property type="entry name" value="RNF168/RNF169_E3_ubiq-ligase"/>
</dbReference>
<dbReference type="InterPro" id="IPR018957">
    <property type="entry name" value="Znf_C3HC4_RING-type"/>
</dbReference>
<dbReference type="InterPro" id="IPR001841">
    <property type="entry name" value="Znf_RING"/>
</dbReference>
<dbReference type="InterPro" id="IPR013083">
    <property type="entry name" value="Znf_RING/FYVE/PHD"/>
</dbReference>
<dbReference type="PANTHER" id="PTHR23328:SF1">
    <property type="entry name" value="E3 UBIQUITIN-PROTEIN LIGASE RNF168"/>
    <property type="match status" value="1"/>
</dbReference>
<dbReference type="PANTHER" id="PTHR23328">
    <property type="entry name" value="RING-TYPE DOMAIN-CONTAINING PROTEIN"/>
    <property type="match status" value="1"/>
</dbReference>
<dbReference type="Pfam" id="PF00097">
    <property type="entry name" value="zf-C3HC4"/>
    <property type="match status" value="1"/>
</dbReference>
<dbReference type="SMART" id="SM00184">
    <property type="entry name" value="RING"/>
    <property type="match status" value="1"/>
</dbReference>
<dbReference type="SUPFAM" id="SSF57850">
    <property type="entry name" value="RING/U-box"/>
    <property type="match status" value="1"/>
</dbReference>
<dbReference type="PROSITE" id="PS50089">
    <property type="entry name" value="ZF_RING_2"/>
    <property type="match status" value="1"/>
</dbReference>
<keyword id="KW-0156">Chromatin regulator</keyword>
<keyword id="KW-0227">DNA damage</keyword>
<keyword id="KW-0234">DNA repair</keyword>
<keyword id="KW-0479">Metal-binding</keyword>
<keyword id="KW-0539">Nucleus</keyword>
<keyword id="KW-1185">Reference proteome</keyword>
<keyword id="KW-0808">Transferase</keyword>
<keyword id="KW-0833">Ubl conjugation pathway</keyword>
<keyword id="KW-0862">Zinc</keyword>
<keyword id="KW-0863">Zinc-finger</keyword>
<feature type="chain" id="PRO_0000367285" description="E3 ubiquitin-protein ligase rnf168">
    <location>
        <begin position="1"/>
        <end position="535"/>
    </location>
</feature>
<feature type="zinc finger region" description="RING-type" evidence="1">
    <location>
        <begin position="16"/>
        <end position="55"/>
    </location>
</feature>
<feature type="region of interest" description="Disordered" evidence="2">
    <location>
        <begin position="429"/>
        <end position="535"/>
    </location>
</feature>
<feature type="short sequence motif" description="LR motif 1" evidence="1">
    <location>
        <begin position="112"/>
        <end position="130"/>
    </location>
</feature>
<feature type="short sequence motif" description="UMI motif" evidence="1">
    <location>
        <begin position="145"/>
        <end position="153"/>
    </location>
</feature>
<feature type="short sequence motif" description="MIU motif 1" evidence="1">
    <location>
        <begin position="170"/>
        <end position="193"/>
    </location>
</feature>
<feature type="short sequence motif" description="MIU motif 2" evidence="1">
    <location>
        <begin position="406"/>
        <end position="429"/>
    </location>
</feature>
<feature type="short sequence motif" description="LR motif 2" evidence="1">
    <location>
        <begin position="433"/>
        <end position="444"/>
    </location>
</feature>
<feature type="compositionally biased region" description="Basic and acidic residues" evidence="2">
    <location>
        <begin position="429"/>
        <end position="443"/>
    </location>
</feature>
<feature type="compositionally biased region" description="Polar residues" evidence="2">
    <location>
        <begin position="462"/>
        <end position="478"/>
    </location>
</feature>
<feature type="compositionally biased region" description="Polar residues" evidence="2">
    <location>
        <begin position="492"/>
        <end position="507"/>
    </location>
</feature>
<accession>B0BLU1</accession>
<protein>
    <recommendedName>
        <fullName evidence="1">E3 ubiquitin-protein ligase rnf168</fullName>
        <ecNumber evidence="1">2.3.2.27</ecNumber>
    </recommendedName>
    <alternativeName>
        <fullName evidence="1">RING finger protein 168</fullName>
    </alternativeName>
    <alternativeName>
        <fullName>RING-type E3 ubiquitin transferase rnf168</fullName>
    </alternativeName>
</protein>